<accession>Q8K9U4</accession>
<name>TRUA_BUCAP</name>
<reference key="1">
    <citation type="journal article" date="2002" name="Science">
        <title>50 million years of genomic stasis in endosymbiotic bacteria.</title>
        <authorList>
            <person name="Tamas I."/>
            <person name="Klasson L."/>
            <person name="Canbaeck B."/>
            <person name="Naeslund A.K."/>
            <person name="Eriksson A.-S."/>
            <person name="Wernegreen J.J."/>
            <person name="Sandstroem J.P."/>
            <person name="Moran N.A."/>
            <person name="Andersson S.G.E."/>
        </authorList>
    </citation>
    <scope>NUCLEOTIDE SEQUENCE [LARGE SCALE GENOMIC DNA]</scope>
    <source>
        <strain>Sg</strain>
    </source>
</reference>
<proteinExistence type="inferred from homology"/>
<dbReference type="EC" id="5.4.99.12" evidence="1"/>
<dbReference type="EMBL" id="AE013218">
    <property type="protein sequence ID" value="AAM67758.1"/>
    <property type="molecule type" value="Genomic_DNA"/>
</dbReference>
<dbReference type="RefSeq" id="WP_011053725.1">
    <property type="nucleotide sequence ID" value="NC_004061.1"/>
</dbReference>
<dbReference type="SMR" id="Q8K9U4"/>
<dbReference type="STRING" id="198804.BUsg_193"/>
<dbReference type="GeneID" id="93003661"/>
<dbReference type="KEGG" id="bas:BUsg_193"/>
<dbReference type="eggNOG" id="COG0101">
    <property type="taxonomic scope" value="Bacteria"/>
</dbReference>
<dbReference type="HOGENOM" id="CLU_014673_0_2_6"/>
<dbReference type="Proteomes" id="UP000000416">
    <property type="component" value="Chromosome"/>
</dbReference>
<dbReference type="GO" id="GO:0003723">
    <property type="term" value="F:RNA binding"/>
    <property type="evidence" value="ECO:0007669"/>
    <property type="project" value="InterPro"/>
</dbReference>
<dbReference type="GO" id="GO:0160147">
    <property type="term" value="F:tRNA pseudouridine(38-40) synthase activity"/>
    <property type="evidence" value="ECO:0007669"/>
    <property type="project" value="UniProtKB-EC"/>
</dbReference>
<dbReference type="GO" id="GO:0031119">
    <property type="term" value="P:tRNA pseudouridine synthesis"/>
    <property type="evidence" value="ECO:0007669"/>
    <property type="project" value="UniProtKB-UniRule"/>
</dbReference>
<dbReference type="CDD" id="cd02570">
    <property type="entry name" value="PseudoU_synth_EcTruA"/>
    <property type="match status" value="1"/>
</dbReference>
<dbReference type="FunFam" id="3.30.70.580:FF:000001">
    <property type="entry name" value="tRNA pseudouridine synthase A"/>
    <property type="match status" value="1"/>
</dbReference>
<dbReference type="Gene3D" id="3.30.70.660">
    <property type="entry name" value="Pseudouridine synthase I, catalytic domain, C-terminal subdomain"/>
    <property type="match status" value="1"/>
</dbReference>
<dbReference type="Gene3D" id="3.30.70.580">
    <property type="entry name" value="Pseudouridine synthase I, catalytic domain, N-terminal subdomain"/>
    <property type="match status" value="1"/>
</dbReference>
<dbReference type="HAMAP" id="MF_00171">
    <property type="entry name" value="TruA"/>
    <property type="match status" value="1"/>
</dbReference>
<dbReference type="InterPro" id="IPR020103">
    <property type="entry name" value="PsdUridine_synth_cat_dom_sf"/>
</dbReference>
<dbReference type="InterPro" id="IPR001406">
    <property type="entry name" value="PsdUridine_synth_TruA"/>
</dbReference>
<dbReference type="InterPro" id="IPR020097">
    <property type="entry name" value="PsdUridine_synth_TruA_a/b_dom"/>
</dbReference>
<dbReference type="InterPro" id="IPR020095">
    <property type="entry name" value="PsdUridine_synth_TruA_C"/>
</dbReference>
<dbReference type="InterPro" id="IPR020094">
    <property type="entry name" value="TruA/RsuA/RluB/E/F_N"/>
</dbReference>
<dbReference type="NCBIfam" id="TIGR00071">
    <property type="entry name" value="hisT_truA"/>
    <property type="match status" value="1"/>
</dbReference>
<dbReference type="PANTHER" id="PTHR11142">
    <property type="entry name" value="PSEUDOURIDYLATE SYNTHASE"/>
    <property type="match status" value="1"/>
</dbReference>
<dbReference type="PANTHER" id="PTHR11142:SF0">
    <property type="entry name" value="TRNA PSEUDOURIDINE SYNTHASE-LIKE 1"/>
    <property type="match status" value="1"/>
</dbReference>
<dbReference type="Pfam" id="PF01416">
    <property type="entry name" value="PseudoU_synth_1"/>
    <property type="match status" value="2"/>
</dbReference>
<dbReference type="PIRSF" id="PIRSF001430">
    <property type="entry name" value="tRNA_psdUrid_synth"/>
    <property type="match status" value="1"/>
</dbReference>
<dbReference type="SUPFAM" id="SSF55120">
    <property type="entry name" value="Pseudouridine synthase"/>
    <property type="match status" value="1"/>
</dbReference>
<organism>
    <name type="scientific">Buchnera aphidicola subsp. Schizaphis graminum (strain Sg)</name>
    <dbReference type="NCBI Taxonomy" id="198804"/>
    <lineage>
        <taxon>Bacteria</taxon>
        <taxon>Pseudomonadati</taxon>
        <taxon>Pseudomonadota</taxon>
        <taxon>Gammaproteobacteria</taxon>
        <taxon>Enterobacterales</taxon>
        <taxon>Erwiniaceae</taxon>
        <taxon>Buchnera</taxon>
    </lineage>
</organism>
<sequence>MKEKKNKKFALGVEYDGSYYHGWQSQKGLSTIQSEIEKALSKIANHQVNVICAGRTDSGVHSIGQVIHFTSISFRSDFSWIVGVNSYLSKNISVKWIKEVSENFNARYSAISRSYRYIIYNHKCRSAIFRNRSNHVYKELNVDKMYFEAQSLLGEHDFSSFRSSGCQSRSPFRTITDLNIRRLKNLVIIDITANSFLYHMVRNIVGSLIQINDNTKKNYIKKILDKKDRNYAGPTVSARGLYLFFVKYPMCFNLPIFKDDFII</sequence>
<feature type="chain" id="PRO_0000057349" description="tRNA pseudouridine synthase A">
    <location>
        <begin position="1"/>
        <end position="263"/>
    </location>
</feature>
<feature type="active site" description="Nucleophile" evidence="1">
    <location>
        <position position="57"/>
    </location>
</feature>
<feature type="binding site" evidence="1">
    <location>
        <position position="115"/>
    </location>
    <ligand>
        <name>substrate</name>
    </ligand>
</feature>
<protein>
    <recommendedName>
        <fullName evidence="1">tRNA pseudouridine synthase A</fullName>
        <ecNumber evidence="1">5.4.99.12</ecNumber>
    </recommendedName>
    <alternativeName>
        <fullName evidence="1">tRNA pseudouridine(38-40) synthase</fullName>
    </alternativeName>
    <alternativeName>
        <fullName evidence="1">tRNA pseudouridylate synthase I</fullName>
    </alternativeName>
    <alternativeName>
        <fullName evidence="1">tRNA-uridine isomerase I</fullName>
    </alternativeName>
</protein>
<evidence type="ECO:0000255" key="1">
    <source>
        <dbReference type="HAMAP-Rule" id="MF_00171"/>
    </source>
</evidence>
<keyword id="KW-0413">Isomerase</keyword>
<keyword id="KW-0819">tRNA processing</keyword>
<gene>
    <name evidence="1" type="primary">truA</name>
    <name type="ordered locus">BUsg_193</name>
</gene>
<comment type="function">
    <text evidence="1">Formation of pseudouridine at positions 38, 39 and 40 in the anticodon stem and loop of transfer RNAs.</text>
</comment>
<comment type="catalytic activity">
    <reaction evidence="1">
        <text>uridine(38/39/40) in tRNA = pseudouridine(38/39/40) in tRNA</text>
        <dbReference type="Rhea" id="RHEA:22376"/>
        <dbReference type="Rhea" id="RHEA-COMP:10085"/>
        <dbReference type="Rhea" id="RHEA-COMP:10087"/>
        <dbReference type="ChEBI" id="CHEBI:65314"/>
        <dbReference type="ChEBI" id="CHEBI:65315"/>
        <dbReference type="EC" id="5.4.99.12"/>
    </reaction>
</comment>
<comment type="subunit">
    <text evidence="1">Homodimer.</text>
</comment>
<comment type="similarity">
    <text evidence="1">Belongs to the tRNA pseudouridine synthase TruA family.</text>
</comment>